<name>RL18_HAEI8</name>
<protein>
    <recommendedName>
        <fullName evidence="1">Large ribosomal subunit protein uL18</fullName>
    </recommendedName>
    <alternativeName>
        <fullName evidence="2">50S ribosomal protein L18</fullName>
    </alternativeName>
</protein>
<comment type="function">
    <text evidence="1">This is one of the proteins that bind and probably mediate the attachment of the 5S RNA into the large ribosomal subunit, where it forms part of the central protuberance.</text>
</comment>
<comment type="subunit">
    <text evidence="1">Part of the 50S ribosomal subunit; part of the 5S rRNA/L5/L18/L25 subcomplex. Contacts the 5S and 23S rRNAs.</text>
</comment>
<comment type="similarity">
    <text evidence="1">Belongs to the universal ribosomal protein uL18 family.</text>
</comment>
<dbReference type="EMBL" id="CP000057">
    <property type="protein sequence ID" value="AAX87842.1"/>
    <property type="molecule type" value="Genomic_DNA"/>
</dbReference>
<dbReference type="RefSeq" id="WP_005625873.1">
    <property type="nucleotide sequence ID" value="NC_007146.2"/>
</dbReference>
<dbReference type="SMR" id="Q4QMA5"/>
<dbReference type="GeneID" id="93219834"/>
<dbReference type="KEGG" id="hit:NTHI0957"/>
<dbReference type="HOGENOM" id="CLU_098841_0_1_6"/>
<dbReference type="Proteomes" id="UP000002525">
    <property type="component" value="Chromosome"/>
</dbReference>
<dbReference type="GO" id="GO:0022625">
    <property type="term" value="C:cytosolic large ribosomal subunit"/>
    <property type="evidence" value="ECO:0007669"/>
    <property type="project" value="TreeGrafter"/>
</dbReference>
<dbReference type="GO" id="GO:0008097">
    <property type="term" value="F:5S rRNA binding"/>
    <property type="evidence" value="ECO:0007669"/>
    <property type="project" value="TreeGrafter"/>
</dbReference>
<dbReference type="GO" id="GO:0003735">
    <property type="term" value="F:structural constituent of ribosome"/>
    <property type="evidence" value="ECO:0007669"/>
    <property type="project" value="InterPro"/>
</dbReference>
<dbReference type="GO" id="GO:0006412">
    <property type="term" value="P:translation"/>
    <property type="evidence" value="ECO:0007669"/>
    <property type="project" value="UniProtKB-UniRule"/>
</dbReference>
<dbReference type="CDD" id="cd00432">
    <property type="entry name" value="Ribosomal_L18_L5e"/>
    <property type="match status" value="1"/>
</dbReference>
<dbReference type="FunFam" id="3.30.420.100:FF:000001">
    <property type="entry name" value="50S ribosomal protein L18"/>
    <property type="match status" value="1"/>
</dbReference>
<dbReference type="Gene3D" id="3.30.420.100">
    <property type="match status" value="1"/>
</dbReference>
<dbReference type="HAMAP" id="MF_01337_B">
    <property type="entry name" value="Ribosomal_uL18_B"/>
    <property type="match status" value="1"/>
</dbReference>
<dbReference type="InterPro" id="IPR004389">
    <property type="entry name" value="Ribosomal_uL18_bac-type"/>
</dbReference>
<dbReference type="InterPro" id="IPR005484">
    <property type="entry name" value="Ribosomal_uL18_bac/euk"/>
</dbReference>
<dbReference type="NCBIfam" id="TIGR00060">
    <property type="entry name" value="L18_bact"/>
    <property type="match status" value="1"/>
</dbReference>
<dbReference type="PANTHER" id="PTHR12899">
    <property type="entry name" value="39S RIBOSOMAL PROTEIN L18, MITOCHONDRIAL"/>
    <property type="match status" value="1"/>
</dbReference>
<dbReference type="PANTHER" id="PTHR12899:SF3">
    <property type="entry name" value="LARGE RIBOSOMAL SUBUNIT PROTEIN UL18M"/>
    <property type="match status" value="1"/>
</dbReference>
<dbReference type="Pfam" id="PF00861">
    <property type="entry name" value="Ribosomal_L18p"/>
    <property type="match status" value="1"/>
</dbReference>
<dbReference type="SUPFAM" id="SSF53137">
    <property type="entry name" value="Translational machinery components"/>
    <property type="match status" value="1"/>
</dbReference>
<accession>Q4QMA5</accession>
<gene>
    <name evidence="1" type="primary">rplR</name>
    <name type="ordered locus">NTHI0957</name>
</gene>
<feature type="chain" id="PRO_0000251317" description="Large ribosomal subunit protein uL18">
    <location>
        <begin position="1"/>
        <end position="117"/>
    </location>
</feature>
<reference key="1">
    <citation type="journal article" date="2005" name="J. Bacteriol.">
        <title>Genomic sequence of an otitis media isolate of nontypeable Haemophilus influenzae: comparative study with H. influenzae serotype d, strain KW20.</title>
        <authorList>
            <person name="Harrison A."/>
            <person name="Dyer D.W."/>
            <person name="Gillaspy A."/>
            <person name="Ray W.C."/>
            <person name="Mungur R."/>
            <person name="Carson M.B."/>
            <person name="Zhong H."/>
            <person name="Gipson J."/>
            <person name="Gipson M."/>
            <person name="Johnson L.S."/>
            <person name="Lewis L."/>
            <person name="Bakaletz L.O."/>
            <person name="Munson R.S. Jr."/>
        </authorList>
    </citation>
    <scope>NUCLEOTIDE SEQUENCE [LARGE SCALE GENOMIC DNA]</scope>
    <source>
        <strain>86-028NP</strain>
    </source>
</reference>
<organism>
    <name type="scientific">Haemophilus influenzae (strain 86-028NP)</name>
    <dbReference type="NCBI Taxonomy" id="281310"/>
    <lineage>
        <taxon>Bacteria</taxon>
        <taxon>Pseudomonadati</taxon>
        <taxon>Pseudomonadota</taxon>
        <taxon>Gammaproteobacteria</taxon>
        <taxon>Pasteurellales</taxon>
        <taxon>Pasteurellaceae</taxon>
        <taxon>Haemophilus</taxon>
    </lineage>
</organism>
<evidence type="ECO:0000255" key="1">
    <source>
        <dbReference type="HAMAP-Rule" id="MF_01337"/>
    </source>
</evidence>
<evidence type="ECO:0000305" key="2"/>
<keyword id="KW-0687">Ribonucleoprotein</keyword>
<keyword id="KW-0689">Ribosomal protein</keyword>
<keyword id="KW-0694">RNA-binding</keyword>
<keyword id="KW-0699">rRNA-binding</keyword>
<proteinExistence type="inferred from homology"/>
<sequence>MDKKSARIRRAARARHMMREQGVTRLVIHRTPRHIYAQVIAPNGSEVLAAASTVEKAIREQVKYTGNKDAAAAVGKAVAERALAKGVQAVAFDRSGFKYHGRVQTLADAAREAGLQF</sequence>